<dbReference type="EMBL" id="KU645835">
    <property type="protein sequence ID" value="AMR44283.1"/>
    <property type="molecule type" value="Genomic_DNA"/>
</dbReference>
<dbReference type="GO" id="GO:0005634">
    <property type="term" value="C:nucleus"/>
    <property type="evidence" value="ECO:0007669"/>
    <property type="project" value="UniProtKB-SubCell"/>
</dbReference>
<dbReference type="GO" id="GO:0003677">
    <property type="term" value="F:DNA binding"/>
    <property type="evidence" value="ECO:0007669"/>
    <property type="project" value="UniProtKB-KW"/>
</dbReference>
<dbReference type="GO" id="GO:0000981">
    <property type="term" value="F:DNA-binding transcription factor activity, RNA polymerase II-specific"/>
    <property type="evidence" value="ECO:0007669"/>
    <property type="project" value="InterPro"/>
</dbReference>
<dbReference type="GO" id="GO:0008270">
    <property type="term" value="F:zinc ion binding"/>
    <property type="evidence" value="ECO:0007669"/>
    <property type="project" value="InterPro"/>
</dbReference>
<dbReference type="CDD" id="cd00067">
    <property type="entry name" value="GAL4"/>
    <property type="match status" value="1"/>
</dbReference>
<dbReference type="Gene3D" id="4.10.240.10">
    <property type="entry name" value="Zn(2)-C6 fungal-type DNA-binding domain"/>
    <property type="match status" value="1"/>
</dbReference>
<dbReference type="InterPro" id="IPR021858">
    <property type="entry name" value="Fun_TF"/>
</dbReference>
<dbReference type="InterPro" id="IPR036864">
    <property type="entry name" value="Zn2-C6_fun-type_DNA-bd_sf"/>
</dbReference>
<dbReference type="InterPro" id="IPR001138">
    <property type="entry name" value="Zn2Cys6_DnaBD"/>
</dbReference>
<dbReference type="PANTHER" id="PTHR37534:SF20">
    <property type="entry name" value="PRO1A C6 ZINK-FINGER PROTEIN"/>
    <property type="match status" value="1"/>
</dbReference>
<dbReference type="PANTHER" id="PTHR37534">
    <property type="entry name" value="TRANSCRIPTIONAL ACTIVATOR PROTEIN UGA3"/>
    <property type="match status" value="1"/>
</dbReference>
<dbReference type="Pfam" id="PF11951">
    <property type="entry name" value="Fungal_trans_2"/>
    <property type="match status" value="1"/>
</dbReference>
<dbReference type="Pfam" id="PF00172">
    <property type="entry name" value="Zn_clus"/>
    <property type="match status" value="1"/>
</dbReference>
<dbReference type="SMART" id="SM00066">
    <property type="entry name" value="GAL4"/>
    <property type="match status" value="1"/>
</dbReference>
<dbReference type="SUPFAM" id="SSF57701">
    <property type="entry name" value="Zn2/Cys6 DNA-binding domain"/>
    <property type="match status" value="1"/>
</dbReference>
<dbReference type="PROSITE" id="PS00463">
    <property type="entry name" value="ZN2_CY6_FUNGAL_1"/>
    <property type="match status" value="1"/>
</dbReference>
<dbReference type="PROSITE" id="PS50048">
    <property type="entry name" value="ZN2_CY6_FUNGAL_2"/>
    <property type="match status" value="1"/>
</dbReference>
<comment type="function">
    <text evidence="3 6">Transcription factor; part of the gene cluster that mediates the biosynthesis of the phomopsins, a group of hexapeptide mycotoxins which infects lupins and causes lupinosis disease in livestock (PubMed:26979951). May play a role in the regulation of the production of phomopsins (Probable).</text>
</comment>
<comment type="subcellular location">
    <subcellularLocation>
        <location evidence="1">Nucleus</location>
    </subcellularLocation>
</comment>
<gene>
    <name evidence="5" type="primary">phomR'</name>
    <name evidence="4" type="synonym">PhomR</name>
</gene>
<reference key="1">
    <citation type="journal article" date="2016" name="Proc. Natl. Acad. Sci. U.S.A.">
        <title>Biosynthetic investigation of phomopsins reveals a widespread pathway for ribosomal natural products in Ascomycetes.</title>
        <authorList>
            <person name="Ding W."/>
            <person name="Liu W.Q."/>
            <person name="Jia Y."/>
            <person name="Li Y."/>
            <person name="van der Donk W.A."/>
            <person name="Zhang Q."/>
        </authorList>
    </citation>
    <scope>NUCLEOTIDE SEQUENCE [GENOMIC DNA]</scope>
    <scope>FUNCTION</scope>
    <source>
        <strain>ATCC 26115 / IMI 115107 / C 1557</strain>
    </source>
</reference>
<reference key="2">
    <citation type="journal article" date="2021" name="Angew. Chem. Int. Ed.">
        <title>Biosynthetic studies of phomopsins unveil posttranslational installation of dehydroamino acids by ustYa family proteins.</title>
        <authorList>
            <person name="Sogahata K."/>
            <person name="Ozaki T."/>
            <person name="Igarashi Y."/>
            <person name="Naganuma Y."/>
            <person name="Liu C."/>
            <person name="Minami A."/>
            <person name="Oikawa H."/>
        </authorList>
    </citation>
    <scope>NOMENCLATURE</scope>
    <source>
        <strain>ATCC 26115 / IMI 115107 / C 1557</strain>
    </source>
</reference>
<protein>
    <recommendedName>
        <fullName evidence="5">Transcription factor phomR'</fullName>
    </recommendedName>
    <alternativeName>
        <fullName evidence="5">Phomopsin biosynthesis cluster protein R'</fullName>
    </alternativeName>
</protein>
<proteinExistence type="inferred from homology"/>
<keyword id="KW-0238">DNA-binding</keyword>
<keyword id="KW-0479">Metal-binding</keyword>
<keyword id="KW-0539">Nucleus</keyword>
<keyword id="KW-0804">Transcription</keyword>
<keyword id="KW-0805">Transcription regulation</keyword>
<keyword id="KW-0843">Virulence</keyword>
<keyword id="KW-0862">Zinc</keyword>
<organism>
    <name type="scientific">Diaporthe leptostromiformis</name>
    <name type="common">Lupinosis disease fungus</name>
    <name type="synonym">Phomopsis leptostromiformis</name>
    <dbReference type="NCBI Taxonomy" id="291059"/>
    <lineage>
        <taxon>Eukaryota</taxon>
        <taxon>Fungi</taxon>
        <taxon>Dikarya</taxon>
        <taxon>Ascomycota</taxon>
        <taxon>Pezizomycotina</taxon>
        <taxon>Sordariomycetes</taxon>
        <taxon>Sordariomycetidae</taxon>
        <taxon>Diaporthales</taxon>
        <taxon>Diaporthaceae</taxon>
        <taxon>Diaporthe</taxon>
    </lineage>
</organism>
<name>PHOR2_DIALO</name>
<sequence>MTTSTAAKRTKSGCWTCRLRRKKCNEGGPPCDNCEARGIHCHGYGPRPQWKDRGALEREEARKLQYQSGRGRSYSRSSSTAAAAAPKPAEGAMVTGGSSSSSRGSGSSIYVGGNGLGGAQEEQHGDNNAPFSAGTGNFEYQANPAPGMSPLMSDINLALDAHAMDPLDFNIDFSSTPSSAVDKSSSTSADSPSFTSIECSQFPIFSPELPVDTPVALFPQVAPIPPGLPGRESVPVAACTDLVISHGLLLAEMDRPVGQRHGQVMAEGEKGIELMMRCPPAPRAPRLEGQGRSAHILLFVRDWYAASSWRIWSGNIQDCQNHIDAAASLLLEHETALVGEAHRLSNMERKALAFFTVRLIWNDVLLSSTRRTVPKAEMVYRRLLLADSNSRGGDSHTTTSTTGPTTTTPLLAASTFWDLTGCEGAVLLAMLDASILSAWRLGEEASGSLSIRALVGRADKIEAVVEGEIARLSSLLPRSPEKTSSASGKPSHGRKTGPENEVTVATVHSLIFAHAILTDLHQTVSGPRASVPEIGDSISRAISSAWNLWQEQQQQGAGLGLERILAWPYCVAASLAKGDQREVFREIIARTENGDGSSSGGDVQQLKSIVEQCWATSSSNHRDWKDVVQRSNQFGVFLI</sequence>
<evidence type="ECO:0000255" key="1">
    <source>
        <dbReference type="PROSITE-ProRule" id="PRU00227"/>
    </source>
</evidence>
<evidence type="ECO:0000256" key="2">
    <source>
        <dbReference type="SAM" id="MobiDB-lite"/>
    </source>
</evidence>
<evidence type="ECO:0000269" key="3">
    <source>
    </source>
</evidence>
<evidence type="ECO:0000303" key="4">
    <source>
    </source>
</evidence>
<evidence type="ECO:0000303" key="5">
    <source>
    </source>
</evidence>
<evidence type="ECO:0000305" key="6">
    <source>
    </source>
</evidence>
<accession>A0A142I731</accession>
<feature type="chain" id="PRO_0000458399" description="Transcription factor phomR'">
    <location>
        <begin position="1"/>
        <end position="639"/>
    </location>
</feature>
<feature type="DNA-binding region" description="Zn(2)-C6 fungal-type" evidence="1">
    <location>
        <begin position="14"/>
        <end position="41"/>
    </location>
</feature>
<feature type="region of interest" description="Disordered" evidence="2">
    <location>
        <begin position="58"/>
        <end position="136"/>
    </location>
</feature>
<feature type="region of interest" description="Disordered" evidence="2">
    <location>
        <begin position="476"/>
        <end position="499"/>
    </location>
</feature>
<feature type="compositionally biased region" description="Low complexity" evidence="2">
    <location>
        <begin position="68"/>
        <end position="108"/>
    </location>
</feature>